<feature type="chain" id="PRO_1000213882" description="Carbamoyl phosphate synthase large chain">
    <location>
        <begin position="1"/>
        <end position="1051"/>
    </location>
</feature>
<feature type="domain" description="ATP-grasp 1" evidence="1">
    <location>
        <begin position="131"/>
        <end position="325"/>
    </location>
</feature>
<feature type="domain" description="ATP-grasp 2" evidence="1">
    <location>
        <begin position="673"/>
        <end position="863"/>
    </location>
</feature>
<feature type="domain" description="MGS-like" evidence="1">
    <location>
        <begin position="930"/>
        <end position="1051"/>
    </location>
</feature>
<feature type="region of interest" description="Carboxyphosphate synthetic domain" evidence="1">
    <location>
        <begin position="1"/>
        <end position="399"/>
    </location>
</feature>
<feature type="region of interest" description="Oligomerization domain" evidence="1">
    <location>
        <begin position="400"/>
        <end position="548"/>
    </location>
</feature>
<feature type="region of interest" description="Carbamoyl phosphate synthetic domain" evidence="1">
    <location>
        <begin position="549"/>
        <end position="930"/>
    </location>
</feature>
<feature type="region of interest" description="Allosteric domain" evidence="1">
    <location>
        <begin position="931"/>
        <end position="1051"/>
    </location>
</feature>
<feature type="binding site" evidence="1">
    <location>
        <position position="127"/>
    </location>
    <ligand>
        <name>ATP</name>
        <dbReference type="ChEBI" id="CHEBI:30616"/>
        <label>1</label>
    </ligand>
</feature>
<feature type="binding site" evidence="1">
    <location>
        <position position="167"/>
    </location>
    <ligand>
        <name>ATP</name>
        <dbReference type="ChEBI" id="CHEBI:30616"/>
        <label>1</label>
    </ligand>
</feature>
<feature type="binding site" evidence="1">
    <location>
        <position position="173"/>
    </location>
    <ligand>
        <name>ATP</name>
        <dbReference type="ChEBI" id="CHEBI:30616"/>
        <label>1</label>
    </ligand>
</feature>
<feature type="binding site" evidence="1">
    <location>
        <position position="174"/>
    </location>
    <ligand>
        <name>ATP</name>
        <dbReference type="ChEBI" id="CHEBI:30616"/>
        <label>1</label>
    </ligand>
</feature>
<feature type="binding site" evidence="1">
    <location>
        <position position="206"/>
    </location>
    <ligand>
        <name>ATP</name>
        <dbReference type="ChEBI" id="CHEBI:30616"/>
        <label>1</label>
    </ligand>
</feature>
<feature type="binding site" evidence="1">
    <location>
        <position position="208"/>
    </location>
    <ligand>
        <name>ATP</name>
        <dbReference type="ChEBI" id="CHEBI:30616"/>
        <label>1</label>
    </ligand>
</feature>
<feature type="binding site" evidence="1">
    <location>
        <position position="213"/>
    </location>
    <ligand>
        <name>ATP</name>
        <dbReference type="ChEBI" id="CHEBI:30616"/>
        <label>1</label>
    </ligand>
</feature>
<feature type="binding site" evidence="1">
    <location>
        <position position="239"/>
    </location>
    <ligand>
        <name>ATP</name>
        <dbReference type="ChEBI" id="CHEBI:30616"/>
        <label>1</label>
    </ligand>
</feature>
<feature type="binding site" evidence="1">
    <location>
        <position position="240"/>
    </location>
    <ligand>
        <name>ATP</name>
        <dbReference type="ChEBI" id="CHEBI:30616"/>
        <label>1</label>
    </ligand>
</feature>
<feature type="binding site" evidence="1">
    <location>
        <position position="241"/>
    </location>
    <ligand>
        <name>ATP</name>
        <dbReference type="ChEBI" id="CHEBI:30616"/>
        <label>1</label>
    </ligand>
</feature>
<feature type="binding site" evidence="1">
    <location>
        <position position="282"/>
    </location>
    <ligand>
        <name>ATP</name>
        <dbReference type="ChEBI" id="CHEBI:30616"/>
        <label>1</label>
    </ligand>
</feature>
<feature type="binding site" evidence="1">
    <location>
        <position position="282"/>
    </location>
    <ligand>
        <name>Mg(2+)</name>
        <dbReference type="ChEBI" id="CHEBI:18420"/>
        <label>1</label>
    </ligand>
</feature>
<feature type="binding site" evidence="1">
    <location>
        <position position="282"/>
    </location>
    <ligand>
        <name>Mn(2+)</name>
        <dbReference type="ChEBI" id="CHEBI:29035"/>
        <label>1</label>
    </ligand>
</feature>
<feature type="binding site" evidence="1">
    <location>
        <position position="296"/>
    </location>
    <ligand>
        <name>ATP</name>
        <dbReference type="ChEBI" id="CHEBI:30616"/>
        <label>1</label>
    </ligand>
</feature>
<feature type="binding site" evidence="1">
    <location>
        <position position="296"/>
    </location>
    <ligand>
        <name>Mg(2+)</name>
        <dbReference type="ChEBI" id="CHEBI:18420"/>
        <label>1</label>
    </ligand>
</feature>
<feature type="binding site" evidence="1">
    <location>
        <position position="296"/>
    </location>
    <ligand>
        <name>Mg(2+)</name>
        <dbReference type="ChEBI" id="CHEBI:18420"/>
        <label>2</label>
    </ligand>
</feature>
<feature type="binding site" evidence="1">
    <location>
        <position position="296"/>
    </location>
    <ligand>
        <name>Mn(2+)</name>
        <dbReference type="ChEBI" id="CHEBI:29035"/>
        <label>1</label>
    </ligand>
</feature>
<feature type="binding site" evidence="1">
    <location>
        <position position="296"/>
    </location>
    <ligand>
        <name>Mn(2+)</name>
        <dbReference type="ChEBI" id="CHEBI:29035"/>
        <label>2</label>
    </ligand>
</feature>
<feature type="binding site" evidence="1">
    <location>
        <position position="298"/>
    </location>
    <ligand>
        <name>Mg(2+)</name>
        <dbReference type="ChEBI" id="CHEBI:18420"/>
        <label>2</label>
    </ligand>
</feature>
<feature type="binding site" evidence="1">
    <location>
        <position position="298"/>
    </location>
    <ligand>
        <name>Mn(2+)</name>
        <dbReference type="ChEBI" id="CHEBI:29035"/>
        <label>2</label>
    </ligand>
</feature>
<feature type="binding site" evidence="1">
    <location>
        <position position="709"/>
    </location>
    <ligand>
        <name>ATP</name>
        <dbReference type="ChEBI" id="CHEBI:30616"/>
        <label>2</label>
    </ligand>
</feature>
<feature type="binding site" evidence="1">
    <location>
        <position position="748"/>
    </location>
    <ligand>
        <name>ATP</name>
        <dbReference type="ChEBI" id="CHEBI:30616"/>
        <label>2</label>
    </ligand>
</feature>
<feature type="binding site" evidence="1">
    <location>
        <position position="750"/>
    </location>
    <ligand>
        <name>ATP</name>
        <dbReference type="ChEBI" id="CHEBI:30616"/>
        <label>2</label>
    </ligand>
</feature>
<feature type="binding site" evidence="1">
    <location>
        <position position="755"/>
    </location>
    <ligand>
        <name>ATP</name>
        <dbReference type="ChEBI" id="CHEBI:30616"/>
        <label>2</label>
    </ligand>
</feature>
<feature type="binding site" evidence="1">
    <location>
        <position position="779"/>
    </location>
    <ligand>
        <name>ATP</name>
        <dbReference type="ChEBI" id="CHEBI:30616"/>
        <label>2</label>
    </ligand>
</feature>
<feature type="binding site" evidence="1">
    <location>
        <position position="780"/>
    </location>
    <ligand>
        <name>ATP</name>
        <dbReference type="ChEBI" id="CHEBI:30616"/>
        <label>2</label>
    </ligand>
</feature>
<feature type="binding site" evidence="1">
    <location>
        <position position="781"/>
    </location>
    <ligand>
        <name>ATP</name>
        <dbReference type="ChEBI" id="CHEBI:30616"/>
        <label>2</label>
    </ligand>
</feature>
<feature type="binding site" evidence="1">
    <location>
        <position position="782"/>
    </location>
    <ligand>
        <name>ATP</name>
        <dbReference type="ChEBI" id="CHEBI:30616"/>
        <label>2</label>
    </ligand>
</feature>
<feature type="binding site" evidence="1">
    <location>
        <position position="822"/>
    </location>
    <ligand>
        <name>ATP</name>
        <dbReference type="ChEBI" id="CHEBI:30616"/>
        <label>2</label>
    </ligand>
</feature>
<feature type="binding site" evidence="1">
    <location>
        <position position="822"/>
    </location>
    <ligand>
        <name>Mg(2+)</name>
        <dbReference type="ChEBI" id="CHEBI:18420"/>
        <label>3</label>
    </ligand>
</feature>
<feature type="binding site" evidence="1">
    <location>
        <position position="822"/>
    </location>
    <ligand>
        <name>Mn(2+)</name>
        <dbReference type="ChEBI" id="CHEBI:29035"/>
        <label>3</label>
    </ligand>
</feature>
<feature type="binding site" evidence="1">
    <location>
        <position position="834"/>
    </location>
    <ligand>
        <name>ATP</name>
        <dbReference type="ChEBI" id="CHEBI:30616"/>
        <label>2</label>
    </ligand>
</feature>
<feature type="binding site" evidence="1">
    <location>
        <position position="834"/>
    </location>
    <ligand>
        <name>Mg(2+)</name>
        <dbReference type="ChEBI" id="CHEBI:18420"/>
        <label>3</label>
    </ligand>
</feature>
<feature type="binding site" evidence="1">
    <location>
        <position position="834"/>
    </location>
    <ligand>
        <name>Mg(2+)</name>
        <dbReference type="ChEBI" id="CHEBI:18420"/>
        <label>4</label>
    </ligand>
</feature>
<feature type="binding site" evidence="1">
    <location>
        <position position="834"/>
    </location>
    <ligand>
        <name>Mn(2+)</name>
        <dbReference type="ChEBI" id="CHEBI:29035"/>
        <label>3</label>
    </ligand>
</feature>
<feature type="binding site" evidence="1">
    <location>
        <position position="834"/>
    </location>
    <ligand>
        <name>Mn(2+)</name>
        <dbReference type="ChEBI" id="CHEBI:29035"/>
        <label>4</label>
    </ligand>
</feature>
<feature type="binding site" evidence="1">
    <location>
        <position position="836"/>
    </location>
    <ligand>
        <name>Mg(2+)</name>
        <dbReference type="ChEBI" id="CHEBI:18420"/>
        <label>4</label>
    </ligand>
</feature>
<feature type="binding site" evidence="1">
    <location>
        <position position="836"/>
    </location>
    <ligand>
        <name>Mn(2+)</name>
        <dbReference type="ChEBI" id="CHEBI:29035"/>
        <label>4</label>
    </ligand>
</feature>
<evidence type="ECO:0000255" key="1">
    <source>
        <dbReference type="HAMAP-Rule" id="MF_01210"/>
    </source>
</evidence>
<organism>
    <name type="scientific">Saccharolobus islandicus (strain L.S.2.15 / Lassen #1)</name>
    <name type="common">Sulfolobus islandicus</name>
    <dbReference type="NCBI Taxonomy" id="429572"/>
    <lineage>
        <taxon>Archaea</taxon>
        <taxon>Thermoproteota</taxon>
        <taxon>Thermoprotei</taxon>
        <taxon>Sulfolobales</taxon>
        <taxon>Sulfolobaceae</taxon>
        <taxon>Saccharolobus</taxon>
    </lineage>
</organism>
<keyword id="KW-0028">Amino-acid biosynthesis</keyword>
<keyword id="KW-0055">Arginine biosynthesis</keyword>
<keyword id="KW-0067">ATP-binding</keyword>
<keyword id="KW-0436">Ligase</keyword>
<keyword id="KW-0460">Magnesium</keyword>
<keyword id="KW-0464">Manganese</keyword>
<keyword id="KW-0479">Metal-binding</keyword>
<keyword id="KW-0547">Nucleotide-binding</keyword>
<keyword id="KW-0665">Pyrimidine biosynthesis</keyword>
<keyword id="KW-0677">Repeat</keyword>
<gene>
    <name evidence="1" type="primary">carB</name>
    <name type="ordered locus">LS215_1601</name>
</gene>
<accession>C3MQE3</accession>
<comment type="function">
    <text evidence="1">Large subunit of the glutamine-dependent carbamoyl phosphate synthetase (CPSase). CPSase catalyzes the formation of carbamoyl phosphate from the ammonia moiety of glutamine, carbonate, and phosphate donated by ATP, constituting the first step of 2 biosynthetic pathways, one leading to arginine and/or urea and the other to pyrimidine nucleotides. The large subunit (synthetase) binds the substrates ammonia (free or transferred from glutamine from the small subunit), hydrogencarbonate and ATP and carries out an ATP-coupled ligase reaction, activating hydrogencarbonate by forming carboxy phosphate which reacts with ammonia to form carbamoyl phosphate.</text>
</comment>
<comment type="catalytic activity">
    <reaction evidence="1">
        <text>hydrogencarbonate + L-glutamine + 2 ATP + H2O = carbamoyl phosphate + L-glutamate + 2 ADP + phosphate + 2 H(+)</text>
        <dbReference type="Rhea" id="RHEA:18633"/>
        <dbReference type="ChEBI" id="CHEBI:15377"/>
        <dbReference type="ChEBI" id="CHEBI:15378"/>
        <dbReference type="ChEBI" id="CHEBI:17544"/>
        <dbReference type="ChEBI" id="CHEBI:29985"/>
        <dbReference type="ChEBI" id="CHEBI:30616"/>
        <dbReference type="ChEBI" id="CHEBI:43474"/>
        <dbReference type="ChEBI" id="CHEBI:58228"/>
        <dbReference type="ChEBI" id="CHEBI:58359"/>
        <dbReference type="ChEBI" id="CHEBI:456216"/>
        <dbReference type="EC" id="6.3.5.5"/>
    </reaction>
</comment>
<comment type="catalytic activity">
    <molecule>Carbamoyl phosphate synthase large chain</molecule>
    <reaction evidence="1">
        <text>hydrogencarbonate + NH4(+) + 2 ATP = carbamoyl phosphate + 2 ADP + phosphate + 2 H(+)</text>
        <dbReference type="Rhea" id="RHEA:18029"/>
        <dbReference type="ChEBI" id="CHEBI:15378"/>
        <dbReference type="ChEBI" id="CHEBI:17544"/>
        <dbReference type="ChEBI" id="CHEBI:28938"/>
        <dbReference type="ChEBI" id="CHEBI:30616"/>
        <dbReference type="ChEBI" id="CHEBI:43474"/>
        <dbReference type="ChEBI" id="CHEBI:58228"/>
        <dbReference type="ChEBI" id="CHEBI:456216"/>
        <dbReference type="EC" id="6.3.4.16"/>
    </reaction>
</comment>
<comment type="cofactor">
    <cofactor evidence="1">
        <name>Mg(2+)</name>
        <dbReference type="ChEBI" id="CHEBI:18420"/>
    </cofactor>
    <cofactor evidence="1">
        <name>Mn(2+)</name>
        <dbReference type="ChEBI" id="CHEBI:29035"/>
    </cofactor>
    <text evidence="1">Binds 4 Mg(2+) or Mn(2+) ions per subunit.</text>
</comment>
<comment type="pathway">
    <text evidence="1">Amino-acid biosynthesis; L-arginine biosynthesis; carbamoyl phosphate from bicarbonate: step 1/1.</text>
</comment>
<comment type="pathway">
    <text evidence="1">Pyrimidine metabolism; UMP biosynthesis via de novo pathway; (S)-dihydroorotate from bicarbonate: step 1/3.</text>
</comment>
<comment type="subunit">
    <text evidence="1">Composed of two chains; the small (or glutamine) chain promotes the hydrolysis of glutamine to ammonia, which is used by the large (or ammonia) chain to synthesize carbamoyl phosphate. Tetramer of heterodimers (alpha,beta)4.</text>
</comment>
<comment type="domain">
    <text evidence="1">The large subunit is composed of 2 ATP-grasp domains that are involved in binding the 2 ATP molecules needed for carbamoyl phosphate synthesis. The N-terminal ATP-grasp domain (referred to as the carboxyphosphate synthetic component) catalyzes the ATP-dependent phosphorylation of hydrogencarbonate to carboxyphosphate and the subsequent nucleophilic attack by ammonia to form a carbamate intermediate. The C-terminal ATP-grasp domain (referred to as the carbamoyl phosphate synthetic component) then catalyzes the phosphorylation of carbamate with the second ATP to form the end product carbamoyl phosphate. The reactive and unstable enzyme intermediates are sequentially channeled from one active site to the next through the interior of the protein over a distance of at least 96 A.</text>
</comment>
<comment type="similarity">
    <text evidence="1">Belongs to the CarB family.</text>
</comment>
<protein>
    <recommendedName>
        <fullName evidence="1">Carbamoyl phosphate synthase large chain</fullName>
        <ecNumber evidence="1">6.3.4.16</ecNumber>
        <ecNumber evidence="1">6.3.5.5</ecNumber>
    </recommendedName>
    <alternativeName>
        <fullName evidence="1">Carbamoyl phosphate synthetase ammonia chain</fullName>
    </alternativeName>
</protein>
<sequence length="1051" mass="117877">MKETPKKVLVIGSGPIKIAEAAEFDYSGSQALKALKEEGIETVLVNSNVATVQTSKKFADKLYMLPVVWWAVEKVIEKERPDGIMIGFGGQTALNVGVDLHKKGVLQKYGVKVLGTQIDGIEKALSREKFRETMIENNLPVPPSLSARSEEEAIKNAKIVGYPVMVRVSFNLGGRGSMVAWTEEDLKKNIRRALSQSYIGEVLIEKYLYHWIELEYEVMRDKKGNSSVIACIENLDPMGVHTGESTVVAPCQTLDNLEYQNMRTYTIEVARSINLIGECNVQFALNPRGYEYYIIETNPRMSRSSALASKATGYPLAYVSAKLALGYELHEVINKVSGRTCACFEPSLDYIVTKIPRWDLSKFENVDQSLATEMMSVGEVMSIGRSFEESLQKAVRMLDIGEPGVVGGKIYEAKMSKVEALKYLKERRPYWFLYVAKAFKEGATIDEVYEVTGISKFFLNKIKGLVDFYETLKILKEIDEETLKLAKKLGFSDEQISKALNKSTQYVRKIRDQSNIIPVVKLIDTLAGEWPSVTNYMYLTYNGTEDDLEFSQGNKLLIVGAGGFRIGVSVEFDWSVVSLMEAASKYFDEVAVLNYNPETVSTDWDIARKLYFDEINVERVLDLIKKEKFRYVATFSGGQIGNSIAKELEENGVRLLGTSGSSVDIAENREKFSKLLDKLGISQPNWVSATSLEEIKKFVNEVGFPVLVRPSYVLSGSSMKIAYSEEELYEYVRRATEISPKYPVVISKYIENAIEAEVDGVSDGNRVLGITLEHVEEAGVHSGDATMSIPFRKLSENSVNKMRENVLSLARELNIKGPFNVQFVVKDNTPHIIELNLRASRSMPFSSKAKGINLINEAMKAIFNGLDFSEDYYEPPSKYWAVKSPQFSWSQLRGTYPFLGPEMKSTGEAASFGVTFYDALLKSWLSSIPNRIPNKNGIALVYGDKNLDYLKDTAVNLVKFGLTVYSISELPLQGIETIDKTKAEELVRAKKVEIVVTDGYLKKFDYNIRRTAVDYNIPVILNGRLGYEVSKAFLDYDSLTFFEISEYGGGI</sequence>
<dbReference type="EC" id="6.3.4.16" evidence="1"/>
<dbReference type="EC" id="6.3.5.5" evidence="1"/>
<dbReference type="EMBL" id="CP001399">
    <property type="protein sequence ID" value="ACP35606.1"/>
    <property type="molecule type" value="Genomic_DNA"/>
</dbReference>
<dbReference type="RefSeq" id="WP_012713783.1">
    <property type="nucleotide sequence ID" value="NC_012589.1"/>
</dbReference>
<dbReference type="SMR" id="C3MQE3"/>
<dbReference type="GeneID" id="7807980"/>
<dbReference type="KEGG" id="sis:LS215_1601"/>
<dbReference type="HOGENOM" id="CLU_000513_1_3_2"/>
<dbReference type="OrthoDB" id="85487at2157"/>
<dbReference type="UniPathway" id="UPA00068">
    <property type="reaction ID" value="UER00171"/>
</dbReference>
<dbReference type="UniPathway" id="UPA00070">
    <property type="reaction ID" value="UER00115"/>
</dbReference>
<dbReference type="Proteomes" id="UP000001747">
    <property type="component" value="Chromosome"/>
</dbReference>
<dbReference type="GO" id="GO:0005737">
    <property type="term" value="C:cytoplasm"/>
    <property type="evidence" value="ECO:0007669"/>
    <property type="project" value="TreeGrafter"/>
</dbReference>
<dbReference type="GO" id="GO:0005524">
    <property type="term" value="F:ATP binding"/>
    <property type="evidence" value="ECO:0007669"/>
    <property type="project" value="UniProtKB-UniRule"/>
</dbReference>
<dbReference type="GO" id="GO:0004087">
    <property type="term" value="F:carbamoyl-phosphate synthase (ammonia) activity"/>
    <property type="evidence" value="ECO:0007669"/>
    <property type="project" value="RHEA"/>
</dbReference>
<dbReference type="GO" id="GO:0004088">
    <property type="term" value="F:carbamoyl-phosphate synthase (glutamine-hydrolyzing) activity"/>
    <property type="evidence" value="ECO:0007669"/>
    <property type="project" value="UniProtKB-UniRule"/>
</dbReference>
<dbReference type="GO" id="GO:0046872">
    <property type="term" value="F:metal ion binding"/>
    <property type="evidence" value="ECO:0007669"/>
    <property type="project" value="UniProtKB-KW"/>
</dbReference>
<dbReference type="GO" id="GO:0044205">
    <property type="term" value="P:'de novo' UMP biosynthetic process"/>
    <property type="evidence" value="ECO:0007669"/>
    <property type="project" value="UniProtKB-UniRule"/>
</dbReference>
<dbReference type="GO" id="GO:0006541">
    <property type="term" value="P:glutamine metabolic process"/>
    <property type="evidence" value="ECO:0007669"/>
    <property type="project" value="TreeGrafter"/>
</dbReference>
<dbReference type="GO" id="GO:0006526">
    <property type="term" value="P:L-arginine biosynthetic process"/>
    <property type="evidence" value="ECO:0007669"/>
    <property type="project" value="UniProtKB-UniRule"/>
</dbReference>
<dbReference type="FunFam" id="1.10.1030.10:FF:000002">
    <property type="entry name" value="Carbamoyl-phosphate synthase large chain"/>
    <property type="match status" value="1"/>
</dbReference>
<dbReference type="FunFam" id="3.30.1490.20:FF:000001">
    <property type="entry name" value="Carbamoyl-phosphate synthase large chain"/>
    <property type="match status" value="1"/>
</dbReference>
<dbReference type="FunFam" id="3.30.470.20:FF:000001">
    <property type="entry name" value="Carbamoyl-phosphate synthase large chain"/>
    <property type="match status" value="1"/>
</dbReference>
<dbReference type="FunFam" id="3.30.470.20:FF:000026">
    <property type="entry name" value="Carbamoyl-phosphate synthase large chain"/>
    <property type="match status" value="1"/>
</dbReference>
<dbReference type="FunFam" id="3.40.50.20:FF:000001">
    <property type="entry name" value="Carbamoyl-phosphate synthase large chain"/>
    <property type="match status" value="2"/>
</dbReference>
<dbReference type="Gene3D" id="3.40.50.20">
    <property type="match status" value="2"/>
</dbReference>
<dbReference type="Gene3D" id="3.30.1490.20">
    <property type="entry name" value="ATP-grasp fold, A domain"/>
    <property type="match status" value="1"/>
</dbReference>
<dbReference type="Gene3D" id="3.30.470.20">
    <property type="entry name" value="ATP-grasp fold, B domain"/>
    <property type="match status" value="2"/>
</dbReference>
<dbReference type="Gene3D" id="1.10.1030.10">
    <property type="entry name" value="Carbamoyl-phosphate synthetase, large subunit oligomerisation domain"/>
    <property type="match status" value="1"/>
</dbReference>
<dbReference type="HAMAP" id="MF_01210_A">
    <property type="entry name" value="CPSase_L_chain_A"/>
    <property type="match status" value="1"/>
</dbReference>
<dbReference type="InterPro" id="IPR011761">
    <property type="entry name" value="ATP-grasp"/>
</dbReference>
<dbReference type="InterPro" id="IPR013815">
    <property type="entry name" value="ATP_grasp_subdomain_1"/>
</dbReference>
<dbReference type="InterPro" id="IPR006275">
    <property type="entry name" value="CarbamoylP_synth_lsu"/>
</dbReference>
<dbReference type="InterPro" id="IPR005480">
    <property type="entry name" value="CarbamoylP_synth_lsu_oligo"/>
</dbReference>
<dbReference type="InterPro" id="IPR036897">
    <property type="entry name" value="CarbamoylP_synth_lsu_oligo_sf"/>
</dbReference>
<dbReference type="InterPro" id="IPR005479">
    <property type="entry name" value="CbamoylP_synth_lsu-like_ATP-bd"/>
</dbReference>
<dbReference type="InterPro" id="IPR005483">
    <property type="entry name" value="CbamoylP_synth_lsu_CPSase_dom"/>
</dbReference>
<dbReference type="InterPro" id="IPR011607">
    <property type="entry name" value="MGS-like_dom"/>
</dbReference>
<dbReference type="InterPro" id="IPR016185">
    <property type="entry name" value="PreATP-grasp_dom_sf"/>
</dbReference>
<dbReference type="NCBIfam" id="TIGR01369">
    <property type="entry name" value="CPSaseII_lrg"/>
    <property type="match status" value="1"/>
</dbReference>
<dbReference type="NCBIfam" id="NF003671">
    <property type="entry name" value="PRK05294.1"/>
    <property type="match status" value="1"/>
</dbReference>
<dbReference type="NCBIfam" id="NF009455">
    <property type="entry name" value="PRK12815.1"/>
    <property type="match status" value="1"/>
</dbReference>
<dbReference type="PANTHER" id="PTHR11405:SF53">
    <property type="entry name" value="CARBAMOYL-PHOSPHATE SYNTHASE [AMMONIA], MITOCHONDRIAL"/>
    <property type="match status" value="1"/>
</dbReference>
<dbReference type="PANTHER" id="PTHR11405">
    <property type="entry name" value="CARBAMOYLTRANSFERASE FAMILY MEMBER"/>
    <property type="match status" value="1"/>
</dbReference>
<dbReference type="Pfam" id="PF02786">
    <property type="entry name" value="CPSase_L_D2"/>
    <property type="match status" value="2"/>
</dbReference>
<dbReference type="Pfam" id="PF02787">
    <property type="entry name" value="CPSase_L_D3"/>
    <property type="match status" value="1"/>
</dbReference>
<dbReference type="PRINTS" id="PR00098">
    <property type="entry name" value="CPSASE"/>
</dbReference>
<dbReference type="SMART" id="SM01096">
    <property type="entry name" value="CPSase_L_D3"/>
    <property type="match status" value="1"/>
</dbReference>
<dbReference type="SUPFAM" id="SSF48108">
    <property type="entry name" value="Carbamoyl phosphate synthetase, large subunit connection domain"/>
    <property type="match status" value="1"/>
</dbReference>
<dbReference type="SUPFAM" id="SSF56059">
    <property type="entry name" value="Glutathione synthetase ATP-binding domain-like"/>
    <property type="match status" value="2"/>
</dbReference>
<dbReference type="SUPFAM" id="SSF52440">
    <property type="entry name" value="PreATP-grasp domain"/>
    <property type="match status" value="2"/>
</dbReference>
<dbReference type="PROSITE" id="PS50975">
    <property type="entry name" value="ATP_GRASP"/>
    <property type="match status" value="2"/>
</dbReference>
<dbReference type="PROSITE" id="PS00867">
    <property type="entry name" value="CPSASE_2"/>
    <property type="match status" value="1"/>
</dbReference>
<dbReference type="PROSITE" id="PS51855">
    <property type="entry name" value="MGS"/>
    <property type="match status" value="1"/>
</dbReference>
<name>CARB_SACI2</name>
<proteinExistence type="inferred from homology"/>
<reference key="1">
    <citation type="journal article" date="2009" name="Proc. Natl. Acad. Sci. U.S.A.">
        <title>Biogeography of the Sulfolobus islandicus pan-genome.</title>
        <authorList>
            <person name="Reno M.L."/>
            <person name="Held N.L."/>
            <person name="Fields C.J."/>
            <person name="Burke P.V."/>
            <person name="Whitaker R.J."/>
        </authorList>
    </citation>
    <scope>NUCLEOTIDE SEQUENCE [LARGE SCALE GENOMIC DNA]</scope>
    <source>
        <strain>L.S.2.15 / Lassen #1</strain>
    </source>
</reference>